<comment type="function">
    <text evidence="1">Catalyzes the stereoinversion of LL-2,6-diaminopimelate (L,L-DAP) to meso-diaminopimelate (meso-DAP), a precursor of L-lysine and an essential component of the bacterial peptidoglycan.</text>
</comment>
<comment type="catalytic activity">
    <reaction evidence="1">
        <text>(2S,6S)-2,6-diaminopimelate = meso-2,6-diaminopimelate</text>
        <dbReference type="Rhea" id="RHEA:15393"/>
        <dbReference type="ChEBI" id="CHEBI:57609"/>
        <dbReference type="ChEBI" id="CHEBI:57791"/>
        <dbReference type="EC" id="5.1.1.7"/>
    </reaction>
</comment>
<comment type="pathway">
    <text evidence="1">Amino-acid biosynthesis; L-lysine biosynthesis via DAP pathway; DL-2,6-diaminopimelate from LL-2,6-diaminopimelate: step 1/1.</text>
</comment>
<comment type="subunit">
    <text evidence="1">Homodimer.</text>
</comment>
<comment type="subcellular location">
    <subcellularLocation>
        <location evidence="1">Cytoplasm</location>
    </subcellularLocation>
</comment>
<comment type="similarity">
    <text evidence="1">Belongs to the diaminopimelate epimerase family.</text>
</comment>
<accession>Q8DGM2</accession>
<sequence>MSLSFQKYQGLGNDFLLIDNRHQEELLLTPEQAQFWCDRHFGVGADGVIFLLRGTGESDYRMRMYNADGSVAQMCGNGIRCLAKFIFALEGRSAGEIVRYRIDTLAGLIVPEVQADGQVTVDMGKPRLLAQQIPTTLAAADQKVVDVPLTVGDRQWLVTCVSMGNPHCVTFVEDVAALDLAVLGPQFEHHPAFPQRTNTEFVQVLGSDRLRMRVWERGAGMTLACGTGACATLVAAVLTGCLSPGGDQAQATVELPGGDLQIRWDLPSQHLYMTGPALAVFSGTLP</sequence>
<gene>
    <name evidence="1" type="primary">dapF</name>
    <name type="ordered locus">tll2294</name>
</gene>
<organism>
    <name type="scientific">Thermosynechococcus vestitus (strain NIES-2133 / IAM M-273 / BP-1)</name>
    <dbReference type="NCBI Taxonomy" id="197221"/>
    <lineage>
        <taxon>Bacteria</taxon>
        <taxon>Bacillati</taxon>
        <taxon>Cyanobacteriota</taxon>
        <taxon>Cyanophyceae</taxon>
        <taxon>Acaryochloridales</taxon>
        <taxon>Thermosynechococcaceae</taxon>
        <taxon>Thermosynechococcus</taxon>
    </lineage>
</organism>
<name>DAPF_THEVB</name>
<reference key="1">
    <citation type="journal article" date="2002" name="DNA Res.">
        <title>Complete genome structure of the thermophilic cyanobacterium Thermosynechococcus elongatus BP-1.</title>
        <authorList>
            <person name="Nakamura Y."/>
            <person name="Kaneko T."/>
            <person name="Sato S."/>
            <person name="Ikeuchi M."/>
            <person name="Katoh H."/>
            <person name="Sasamoto S."/>
            <person name="Watanabe A."/>
            <person name="Iriguchi M."/>
            <person name="Kawashima K."/>
            <person name="Kimura T."/>
            <person name="Kishida Y."/>
            <person name="Kiyokawa C."/>
            <person name="Kohara M."/>
            <person name="Matsumoto M."/>
            <person name="Matsuno A."/>
            <person name="Nakazaki N."/>
            <person name="Shimpo S."/>
            <person name="Sugimoto M."/>
            <person name="Takeuchi C."/>
            <person name="Yamada M."/>
            <person name="Tabata S."/>
        </authorList>
    </citation>
    <scope>NUCLEOTIDE SEQUENCE [LARGE SCALE GENOMIC DNA]</scope>
    <source>
        <strain>NIES-2133 / IAM M-273 / BP-1</strain>
    </source>
</reference>
<keyword id="KW-0028">Amino-acid biosynthesis</keyword>
<keyword id="KW-0963">Cytoplasm</keyword>
<keyword id="KW-0413">Isomerase</keyword>
<keyword id="KW-0457">Lysine biosynthesis</keyword>
<keyword id="KW-1185">Reference proteome</keyword>
<dbReference type="EC" id="5.1.1.7" evidence="1"/>
<dbReference type="EMBL" id="BA000039">
    <property type="protein sequence ID" value="BAC09846.1"/>
    <property type="molecule type" value="Genomic_DNA"/>
</dbReference>
<dbReference type="RefSeq" id="NP_683084.1">
    <property type="nucleotide sequence ID" value="NC_004113.1"/>
</dbReference>
<dbReference type="RefSeq" id="WP_011058127.1">
    <property type="nucleotide sequence ID" value="NC_004113.1"/>
</dbReference>
<dbReference type="SMR" id="Q8DGM2"/>
<dbReference type="STRING" id="197221.gene:10748912"/>
<dbReference type="EnsemblBacteria" id="BAC09846">
    <property type="protein sequence ID" value="BAC09846"/>
    <property type="gene ID" value="BAC09846"/>
</dbReference>
<dbReference type="KEGG" id="tel:tll2294"/>
<dbReference type="PATRIC" id="fig|197221.4.peg.2403"/>
<dbReference type="eggNOG" id="COG0253">
    <property type="taxonomic scope" value="Bacteria"/>
</dbReference>
<dbReference type="UniPathway" id="UPA00034">
    <property type="reaction ID" value="UER00025"/>
</dbReference>
<dbReference type="Proteomes" id="UP000000440">
    <property type="component" value="Chromosome"/>
</dbReference>
<dbReference type="GO" id="GO:0005829">
    <property type="term" value="C:cytosol"/>
    <property type="evidence" value="ECO:0007669"/>
    <property type="project" value="TreeGrafter"/>
</dbReference>
<dbReference type="GO" id="GO:0008837">
    <property type="term" value="F:diaminopimelate epimerase activity"/>
    <property type="evidence" value="ECO:0007669"/>
    <property type="project" value="UniProtKB-UniRule"/>
</dbReference>
<dbReference type="GO" id="GO:0009089">
    <property type="term" value="P:lysine biosynthetic process via diaminopimelate"/>
    <property type="evidence" value="ECO:0007669"/>
    <property type="project" value="UniProtKB-UniRule"/>
</dbReference>
<dbReference type="FunFam" id="3.10.310.10:FF:000009">
    <property type="entry name" value="Diaminopimelate epimerase chloroplastic"/>
    <property type="match status" value="1"/>
</dbReference>
<dbReference type="Gene3D" id="3.10.310.10">
    <property type="entry name" value="Diaminopimelate Epimerase, Chain A, domain 1"/>
    <property type="match status" value="2"/>
</dbReference>
<dbReference type="HAMAP" id="MF_00197">
    <property type="entry name" value="DAP_epimerase"/>
    <property type="match status" value="1"/>
</dbReference>
<dbReference type="InterPro" id="IPR018510">
    <property type="entry name" value="DAP_epimerase_AS"/>
</dbReference>
<dbReference type="InterPro" id="IPR001653">
    <property type="entry name" value="DAP_epimerase_DapF"/>
</dbReference>
<dbReference type="NCBIfam" id="TIGR00652">
    <property type="entry name" value="DapF"/>
    <property type="match status" value="1"/>
</dbReference>
<dbReference type="PANTHER" id="PTHR31689:SF0">
    <property type="entry name" value="DIAMINOPIMELATE EPIMERASE"/>
    <property type="match status" value="1"/>
</dbReference>
<dbReference type="PANTHER" id="PTHR31689">
    <property type="entry name" value="DIAMINOPIMELATE EPIMERASE, CHLOROPLASTIC"/>
    <property type="match status" value="1"/>
</dbReference>
<dbReference type="Pfam" id="PF01678">
    <property type="entry name" value="DAP_epimerase"/>
    <property type="match status" value="2"/>
</dbReference>
<dbReference type="SUPFAM" id="SSF54506">
    <property type="entry name" value="Diaminopimelate epimerase-like"/>
    <property type="match status" value="2"/>
</dbReference>
<dbReference type="PROSITE" id="PS01326">
    <property type="entry name" value="DAP_EPIMERASE"/>
    <property type="match status" value="1"/>
</dbReference>
<feature type="chain" id="PRO_0000149872" description="Diaminopimelate epimerase">
    <location>
        <begin position="1"/>
        <end position="286"/>
    </location>
</feature>
<feature type="active site" description="Proton donor" evidence="1">
    <location>
        <position position="75"/>
    </location>
</feature>
<feature type="active site" description="Proton acceptor" evidence="1">
    <location>
        <position position="225"/>
    </location>
</feature>
<feature type="binding site" evidence="1">
    <location>
        <position position="13"/>
    </location>
    <ligand>
        <name>substrate</name>
    </ligand>
</feature>
<feature type="binding site" evidence="1">
    <location>
        <position position="66"/>
    </location>
    <ligand>
        <name>substrate</name>
    </ligand>
</feature>
<feature type="binding site" evidence="1">
    <location>
        <begin position="76"/>
        <end position="77"/>
    </location>
    <ligand>
        <name>substrate</name>
    </ligand>
</feature>
<feature type="binding site" evidence="1">
    <location>
        <position position="165"/>
    </location>
    <ligand>
        <name>substrate</name>
    </ligand>
</feature>
<feature type="binding site" evidence="1">
    <location>
        <position position="198"/>
    </location>
    <ligand>
        <name>substrate</name>
    </ligand>
</feature>
<feature type="binding site" evidence="1">
    <location>
        <begin position="216"/>
        <end position="217"/>
    </location>
    <ligand>
        <name>substrate</name>
    </ligand>
</feature>
<feature type="binding site" evidence="1">
    <location>
        <begin position="226"/>
        <end position="227"/>
    </location>
    <ligand>
        <name>substrate</name>
    </ligand>
</feature>
<feature type="site" description="Could be important to modulate the pK values of the two catalytic cysteine residues" evidence="1">
    <location>
        <position position="167"/>
    </location>
</feature>
<feature type="site" description="Could be important to modulate the pK values of the two catalytic cysteine residues" evidence="1">
    <location>
        <position position="216"/>
    </location>
</feature>
<proteinExistence type="inferred from homology"/>
<evidence type="ECO:0000255" key="1">
    <source>
        <dbReference type="HAMAP-Rule" id="MF_00197"/>
    </source>
</evidence>
<protein>
    <recommendedName>
        <fullName evidence="1">Diaminopimelate epimerase</fullName>
        <shortName evidence="1">DAP epimerase</shortName>
        <ecNumber evidence="1">5.1.1.7</ecNumber>
    </recommendedName>
    <alternativeName>
        <fullName evidence="1">PLP-independent amino acid racemase</fullName>
    </alternativeName>
</protein>